<accession>P28620</accession>
<comment type="function">
    <text evidence="1">The central subunit of the protein translocation channel SecYEG. Consists of two halves formed by TMs 1-5 and 6-10. These two domains form a lateral gate at the front which open onto the bilayer between TMs 2 and 7, and are clamped together by SecE at the back. The channel is closed by both a pore ring composed of hydrophobic SecY resides and a short helix (helix 2A) on the extracellular side of the membrane which forms a plug. The plug probably moves laterally to allow the channel to open. The ring and the pore may move independently (By similarity).</text>
</comment>
<comment type="subunit">
    <text evidence="1">Component of the Sec protein translocase complex. Heterotrimer consisting of SecY, SecE and SecG subunits. The heterotrimers can form oligomers, although 1 heterotrimer is thought to be able to translocate proteins. Interacts with the ribosome. Interacts with SecDF, and other proteins may be involved. Interacts with SecA (By similarity).</text>
</comment>
<comment type="subcellular location">
    <subcellularLocation>
        <location evidence="1">Cell membrane</location>
        <topology evidence="1">Multi-pass membrane protein</topology>
    </subcellularLocation>
</comment>
<comment type="similarity">
    <text evidence="3">Belongs to the SecY/SEC61-alpha family.</text>
</comment>
<protein>
    <recommendedName>
        <fullName>Protein translocase subunit SecY</fullName>
    </recommendedName>
</protein>
<evidence type="ECO:0000250" key="1"/>
<evidence type="ECO:0000255" key="2"/>
<evidence type="ECO:0000305" key="3"/>
<name>SECY_GEOSE</name>
<keyword id="KW-1003">Cell membrane</keyword>
<keyword id="KW-0472">Membrane</keyword>
<keyword id="KW-0653">Protein transport</keyword>
<keyword id="KW-0811">Translocation</keyword>
<keyword id="KW-0812">Transmembrane</keyword>
<keyword id="KW-1133">Transmembrane helix</keyword>
<keyword id="KW-0813">Transport</keyword>
<gene>
    <name type="primary">secY</name>
</gene>
<dbReference type="EMBL" id="M88104">
    <property type="protein sequence ID" value="AAA22204.1"/>
    <property type="molecule type" value="Genomic_DNA"/>
</dbReference>
<dbReference type="PIR" id="A42196">
    <property type="entry name" value="A42196"/>
</dbReference>
<dbReference type="SMR" id="P28620"/>
<dbReference type="GO" id="GO:0005886">
    <property type="term" value="C:plasma membrane"/>
    <property type="evidence" value="ECO:0007669"/>
    <property type="project" value="UniProtKB-SubCell"/>
</dbReference>
<dbReference type="GO" id="GO:0015031">
    <property type="term" value="P:protein transport"/>
    <property type="evidence" value="ECO:0007669"/>
    <property type="project" value="UniProtKB-KW"/>
</dbReference>
<dbReference type="Gene3D" id="1.10.3370.10">
    <property type="entry name" value="SecY subunit domain"/>
    <property type="match status" value="1"/>
</dbReference>
<dbReference type="InterPro" id="IPR002208">
    <property type="entry name" value="SecY/SEC61-alpha"/>
</dbReference>
<dbReference type="InterPro" id="IPR023201">
    <property type="entry name" value="SecY_dom_sf"/>
</dbReference>
<dbReference type="PANTHER" id="PTHR10906">
    <property type="entry name" value="SECY/SEC61-ALPHA FAMILY MEMBER"/>
    <property type="match status" value="1"/>
</dbReference>
<dbReference type="Pfam" id="PF00344">
    <property type="entry name" value="SecY"/>
    <property type="match status" value="1"/>
</dbReference>
<dbReference type="PRINTS" id="PR00303">
    <property type="entry name" value="SECYTRNLCASE"/>
</dbReference>
<dbReference type="SUPFAM" id="SSF103491">
    <property type="entry name" value="Preprotein translocase SecY subunit"/>
    <property type="match status" value="1"/>
</dbReference>
<sequence>NPEQMAENLKKQGGYIPGIRPGKNTQEYVTRILYRLTLVGSVFLAVIAVLPVFFVNVANLPPSAKIGGTSLLIVVGVALETMKQLESQLVKRHYRGFIK</sequence>
<reference key="1">
    <citation type="journal article" date="1992" name="Biochemistry">
        <title>Zinc, a novel structural element found in the family of bacterial adenylate kinases.</title>
        <authorList>
            <person name="Glaser P."/>
            <person name="Presecan E."/>
            <person name="Delepierre M."/>
            <person name="Surewicz W.K."/>
            <person name="Mantsch H.H."/>
            <person name="Barzu O."/>
            <person name="Gilles A.M."/>
        </authorList>
    </citation>
    <scope>NUCLEOTIDE SEQUENCE [GENOMIC DNA]</scope>
</reference>
<organism>
    <name type="scientific">Geobacillus stearothermophilus</name>
    <name type="common">Bacillus stearothermophilus</name>
    <dbReference type="NCBI Taxonomy" id="1422"/>
    <lineage>
        <taxon>Bacteria</taxon>
        <taxon>Bacillati</taxon>
        <taxon>Bacillota</taxon>
        <taxon>Bacilli</taxon>
        <taxon>Bacillales</taxon>
        <taxon>Anoxybacillaceae</taxon>
        <taxon>Geobacillus</taxon>
    </lineage>
</organism>
<feature type="chain" id="PRO_0000131710" description="Protein translocase subunit SecY">
    <location>
        <begin position="1" status="less than"/>
        <end position="99"/>
    </location>
</feature>
<feature type="transmembrane region" description="Helical" evidence="2">
    <location>
        <begin position="38"/>
        <end position="58"/>
    </location>
</feature>
<feature type="transmembrane region" description="Helical" evidence="2">
    <location>
        <begin position="60"/>
        <end position="80"/>
    </location>
</feature>
<feature type="non-terminal residue">
    <location>
        <position position="1"/>
    </location>
</feature>
<proteinExistence type="inferred from homology"/>